<proteinExistence type="inferred from homology"/>
<keyword id="KW-0408">Iron</keyword>
<keyword id="KW-0411">Iron-sulfur</keyword>
<keyword id="KW-0479">Metal-binding</keyword>
<keyword id="KW-0496">Mitochondrion</keyword>
<keyword id="KW-0663">Pyridoxal phosphate</keyword>
<keyword id="KW-1185">Reference proteome</keyword>
<keyword id="KW-0808">Transferase</keyword>
<keyword id="KW-0809">Transit peptide</keyword>
<gene>
    <name evidence="4" type="primary">NFS1</name>
    <name evidence="4" type="synonym">SPL1</name>
    <name type="ordered locus">AAL013W</name>
</gene>
<sequence>MLRQVLRRSLSDSRRPLRSVGSISCSARASGIGMRAYSSQIFKEGMQLETHTDIQSAAREQAQERMGSEALASNNSVLKHAYQESVDHGTRPIYLDMQATTPTDPRVVDTMLKFYTGLYGNPHSNTHSYGWETSQEVEKARKNVADVIKADPKEIIFTSGATESNNMALKGVARFYKKRKNHIITTRTEHKCVLEAARSMKDEGFDVTFLNVNEDGLVSLEELEQAIRPETSLVSVMSVNNEIGVVQPIKEIGAICRRHKVFFHSDAAQAYGKIPIDVDEMNIDLLSISSHKIYGPKGIGALYVRRRPRVRMEPLLSGGGQERGFRSGTLPPPLVVGLGHAAKLMVEEYEYDSAHVRRLSDRLLKGLLSIEQTTLNGSADHRYPGCVNVSFAFVEGESLLMALRDIALSSGSACTSASLEPSYVLHAIGRDDALAHSSIRFGIGRFTTEAEVDYVIKAITERVEFLRELSPLWEMYKDGIDLNTIEWSGH</sequence>
<accession>O60028</accession>
<protein>
    <recommendedName>
        <fullName evidence="4">Cysteine desulfurase, mitochondrial</fullName>
        <ecNumber evidence="4">2.8.1.7</ecNumber>
    </recommendedName>
    <alternativeName>
        <fullName evidence="4">tRNA-splicing protein SPL1</fullName>
    </alternativeName>
</protein>
<comment type="function">
    <text evidence="4">Catalyzes the removal of elemental sulfur from cysteine to produce alanine. It supplies the inorganic sulfur for iron-sulfur (Fe-S) clusters. Plays a role in both tRNA-processing and mitochondrial metabolism. Involved in the 2-thio-modification of both 5-carboxymethylaminomethyl-2-thiouridine in mitochondrial tRNAs and 5-methoxycarbonylmethyl-2-thiouridine (mcm5s2U) in cytoplasmic tRNAs.</text>
</comment>
<comment type="catalytic activity">
    <reaction evidence="4">
        <text>(sulfur carrier)-H + L-cysteine = (sulfur carrier)-SH + L-alanine</text>
        <dbReference type="Rhea" id="RHEA:43892"/>
        <dbReference type="Rhea" id="RHEA-COMP:14737"/>
        <dbReference type="Rhea" id="RHEA-COMP:14739"/>
        <dbReference type="ChEBI" id="CHEBI:29917"/>
        <dbReference type="ChEBI" id="CHEBI:35235"/>
        <dbReference type="ChEBI" id="CHEBI:57972"/>
        <dbReference type="ChEBI" id="CHEBI:64428"/>
        <dbReference type="EC" id="2.8.1.7"/>
    </reaction>
</comment>
<comment type="cofactor">
    <cofactor evidence="3">
        <name>pyridoxal 5'-phosphate</name>
        <dbReference type="ChEBI" id="CHEBI:597326"/>
    </cofactor>
</comment>
<comment type="subcellular location">
    <subcellularLocation>
        <location evidence="4">Mitochondrion</location>
    </subcellularLocation>
</comment>
<comment type="similarity">
    <text evidence="6">Belongs to the class-V pyridoxal-phosphate-dependent aminotransferase family. NifS/IscS subfamily.</text>
</comment>
<organism>
    <name type="scientific">Eremothecium gossypii (strain ATCC 10895 / CBS 109.51 / FGSC 9923 / NRRL Y-1056)</name>
    <name type="common">Yeast</name>
    <name type="synonym">Ashbya gossypii</name>
    <dbReference type="NCBI Taxonomy" id="284811"/>
    <lineage>
        <taxon>Eukaryota</taxon>
        <taxon>Fungi</taxon>
        <taxon>Dikarya</taxon>
        <taxon>Ascomycota</taxon>
        <taxon>Saccharomycotina</taxon>
        <taxon>Saccharomycetes</taxon>
        <taxon>Saccharomycetales</taxon>
        <taxon>Saccharomycetaceae</taxon>
        <taxon>Eremothecium</taxon>
    </lineage>
</organism>
<dbReference type="EC" id="2.8.1.7" evidence="4"/>
<dbReference type="EMBL" id="AJ006406">
    <property type="protein sequence ID" value="CAA07007.1"/>
    <property type="molecule type" value="Genomic_DNA"/>
</dbReference>
<dbReference type="EMBL" id="AE016814">
    <property type="protein sequence ID" value="AAS50353.1"/>
    <property type="molecule type" value="Genomic_DNA"/>
</dbReference>
<dbReference type="RefSeq" id="NP_982529.1">
    <property type="nucleotide sequence ID" value="NM_207882.1"/>
</dbReference>
<dbReference type="SMR" id="O60028"/>
<dbReference type="FunCoup" id="O60028">
    <property type="interactions" value="922"/>
</dbReference>
<dbReference type="STRING" id="284811.O60028"/>
<dbReference type="EnsemblFungi" id="AAS50353">
    <property type="protein sequence ID" value="AAS50353"/>
    <property type="gene ID" value="AGOS_AAL013W"/>
</dbReference>
<dbReference type="GeneID" id="4618565"/>
<dbReference type="KEGG" id="ago:AGOS_AAL013W"/>
<dbReference type="eggNOG" id="KOG1549">
    <property type="taxonomic scope" value="Eukaryota"/>
</dbReference>
<dbReference type="HOGENOM" id="CLU_003433_0_2_1"/>
<dbReference type="InParanoid" id="O60028"/>
<dbReference type="OMA" id="KGLYWAR"/>
<dbReference type="OrthoDB" id="10250117at2759"/>
<dbReference type="Proteomes" id="UP000000591">
    <property type="component" value="Chromosome I"/>
</dbReference>
<dbReference type="GO" id="GO:0005829">
    <property type="term" value="C:cytosol"/>
    <property type="evidence" value="ECO:0000318"/>
    <property type="project" value="GO_Central"/>
</dbReference>
<dbReference type="GO" id="GO:1990221">
    <property type="term" value="C:L-cysteine desulfurase complex"/>
    <property type="evidence" value="ECO:0007669"/>
    <property type="project" value="EnsemblFungi"/>
</dbReference>
<dbReference type="GO" id="GO:0005739">
    <property type="term" value="C:mitochondrion"/>
    <property type="evidence" value="ECO:0000318"/>
    <property type="project" value="GO_Central"/>
</dbReference>
<dbReference type="GO" id="GO:0005634">
    <property type="term" value="C:nucleus"/>
    <property type="evidence" value="ECO:0000318"/>
    <property type="project" value="GO_Central"/>
</dbReference>
<dbReference type="GO" id="GO:0031071">
    <property type="term" value="F:cysteine desulfurase activity"/>
    <property type="evidence" value="ECO:0000318"/>
    <property type="project" value="GO_Central"/>
</dbReference>
<dbReference type="GO" id="GO:0051536">
    <property type="term" value="F:iron-sulfur cluster binding"/>
    <property type="evidence" value="ECO:0007669"/>
    <property type="project" value="UniProtKB-KW"/>
</dbReference>
<dbReference type="GO" id="GO:0046872">
    <property type="term" value="F:metal ion binding"/>
    <property type="evidence" value="ECO:0007669"/>
    <property type="project" value="UniProtKB-KW"/>
</dbReference>
<dbReference type="GO" id="GO:0030170">
    <property type="term" value="F:pyridoxal phosphate binding"/>
    <property type="evidence" value="ECO:0007669"/>
    <property type="project" value="InterPro"/>
</dbReference>
<dbReference type="GO" id="GO:0044571">
    <property type="term" value="P:[2Fe-2S] cluster assembly"/>
    <property type="evidence" value="ECO:0007669"/>
    <property type="project" value="InterPro"/>
</dbReference>
<dbReference type="GO" id="GO:0006879">
    <property type="term" value="P:intracellular iron ion homeostasis"/>
    <property type="evidence" value="ECO:0007669"/>
    <property type="project" value="EnsemblFungi"/>
</dbReference>
<dbReference type="GO" id="GO:0016226">
    <property type="term" value="P:iron-sulfur cluster assembly"/>
    <property type="evidence" value="ECO:0000318"/>
    <property type="project" value="GO_Central"/>
</dbReference>
<dbReference type="GO" id="GO:0070903">
    <property type="term" value="P:mitochondrial tRNA thio-modification"/>
    <property type="evidence" value="ECO:0007669"/>
    <property type="project" value="EnsemblFungi"/>
</dbReference>
<dbReference type="GO" id="GO:0002143">
    <property type="term" value="P:tRNA wobble position uridine thiolation"/>
    <property type="evidence" value="ECO:0007669"/>
    <property type="project" value="EnsemblFungi"/>
</dbReference>
<dbReference type="FunFam" id="3.40.640.10:FF:000003">
    <property type="entry name" value="Cysteine desulfurase IscS"/>
    <property type="match status" value="1"/>
</dbReference>
<dbReference type="FunFam" id="3.90.1150.10:FF:000002">
    <property type="entry name" value="Cysteine desulfurase IscS"/>
    <property type="match status" value="1"/>
</dbReference>
<dbReference type="Gene3D" id="3.90.1150.10">
    <property type="entry name" value="Aspartate Aminotransferase, domain 1"/>
    <property type="match status" value="1"/>
</dbReference>
<dbReference type="Gene3D" id="3.40.640.10">
    <property type="entry name" value="Type I PLP-dependent aspartate aminotransferase-like (Major domain)"/>
    <property type="match status" value="1"/>
</dbReference>
<dbReference type="HAMAP" id="MF_00331">
    <property type="entry name" value="Cys_desulf_IscS"/>
    <property type="match status" value="1"/>
</dbReference>
<dbReference type="InterPro" id="IPR000192">
    <property type="entry name" value="Aminotrans_V_dom"/>
</dbReference>
<dbReference type="InterPro" id="IPR020578">
    <property type="entry name" value="Aminotrans_V_PyrdxlP_BS"/>
</dbReference>
<dbReference type="InterPro" id="IPR010240">
    <property type="entry name" value="Cys_deSase_IscS"/>
</dbReference>
<dbReference type="InterPro" id="IPR015424">
    <property type="entry name" value="PyrdxlP-dep_Trfase"/>
</dbReference>
<dbReference type="InterPro" id="IPR015421">
    <property type="entry name" value="PyrdxlP-dep_Trfase_major"/>
</dbReference>
<dbReference type="InterPro" id="IPR015422">
    <property type="entry name" value="PyrdxlP-dep_Trfase_small"/>
</dbReference>
<dbReference type="NCBIfam" id="TIGR02006">
    <property type="entry name" value="IscS"/>
    <property type="match status" value="1"/>
</dbReference>
<dbReference type="NCBIfam" id="NF002806">
    <property type="entry name" value="PRK02948.1"/>
    <property type="match status" value="1"/>
</dbReference>
<dbReference type="NCBIfam" id="NF010611">
    <property type="entry name" value="PRK14012.1"/>
    <property type="match status" value="1"/>
</dbReference>
<dbReference type="PANTHER" id="PTHR11601:SF34">
    <property type="entry name" value="CYSTEINE DESULFURASE"/>
    <property type="match status" value="1"/>
</dbReference>
<dbReference type="PANTHER" id="PTHR11601">
    <property type="entry name" value="CYSTEINE DESULFURYLASE FAMILY MEMBER"/>
    <property type="match status" value="1"/>
</dbReference>
<dbReference type="Pfam" id="PF00266">
    <property type="entry name" value="Aminotran_5"/>
    <property type="match status" value="1"/>
</dbReference>
<dbReference type="SUPFAM" id="SSF53383">
    <property type="entry name" value="PLP-dependent transferases"/>
    <property type="match status" value="1"/>
</dbReference>
<dbReference type="PROSITE" id="PS00595">
    <property type="entry name" value="AA_TRANSFER_CLASS_5"/>
    <property type="match status" value="1"/>
</dbReference>
<feature type="transit peptide" description="Mitochondrion" evidence="5">
    <location>
        <begin position="1"/>
        <end status="unknown"/>
    </location>
</feature>
<feature type="chain" id="PRO_0000001300" description="Cysteine desulfurase, mitochondrial">
    <location>
        <begin status="unknown"/>
        <end position="490"/>
    </location>
</feature>
<feature type="active site" description="Cysteine persulfide intermediate" evidence="2">
    <location>
        <position position="414"/>
    </location>
</feature>
<feature type="binding site" evidence="3">
    <location>
        <begin position="161"/>
        <end position="162"/>
    </location>
    <ligand>
        <name>pyridoxal 5'-phosphate</name>
        <dbReference type="ChEBI" id="CHEBI:597326"/>
    </ligand>
</feature>
<feature type="binding site" evidence="1">
    <location>
        <position position="241"/>
    </location>
    <ligand>
        <name>pyridoxal 5'-phosphate</name>
        <dbReference type="ChEBI" id="CHEBI:597326"/>
    </ligand>
</feature>
<feature type="binding site" evidence="3">
    <location>
        <position position="269"/>
    </location>
    <ligand>
        <name>pyridoxal 5'-phosphate</name>
        <dbReference type="ChEBI" id="CHEBI:597326"/>
    </ligand>
</feature>
<feature type="binding site" evidence="3">
    <location>
        <begin position="289"/>
        <end position="291"/>
    </location>
    <ligand>
        <name>pyridoxal 5'-phosphate</name>
        <dbReference type="ChEBI" id="CHEBI:597326"/>
    </ligand>
</feature>
<feature type="binding site" evidence="3">
    <location>
        <position position="329"/>
    </location>
    <ligand>
        <name>pyridoxal 5'-phosphate</name>
        <dbReference type="ChEBI" id="CHEBI:597326"/>
    </ligand>
</feature>
<feature type="binding site" description="via persulfide group" evidence="1">
    <location>
        <position position="414"/>
    </location>
    <ligand>
        <name>[2Fe-2S] cluster</name>
        <dbReference type="ChEBI" id="CHEBI:190135"/>
    </ligand>
</feature>
<feature type="modified residue" description="N6-(pyridoxal phosphate)lysine" evidence="3">
    <location>
        <position position="292"/>
    </location>
</feature>
<evidence type="ECO:0000250" key="1">
    <source>
        <dbReference type="UniProtKB" id="O29689"/>
    </source>
</evidence>
<evidence type="ECO:0000250" key="2">
    <source>
        <dbReference type="UniProtKB" id="P0A6B7"/>
    </source>
</evidence>
<evidence type="ECO:0000250" key="3">
    <source>
        <dbReference type="UniProtKB" id="P0A6B9"/>
    </source>
</evidence>
<evidence type="ECO:0000250" key="4">
    <source>
        <dbReference type="UniProtKB" id="P25374"/>
    </source>
</evidence>
<evidence type="ECO:0000255" key="5"/>
<evidence type="ECO:0000305" key="6"/>
<name>NFS1_EREGS</name>
<reference key="1">
    <citation type="submission" date="1998-05" db="EMBL/GenBank/DDBJ databases">
        <title>Isolation of the Ashbya gossypii LEU2 gene and its use as a marker gene in transformation experiments.</title>
        <authorList>
            <person name="Mohr C."/>
            <person name="Philippsen P."/>
        </authorList>
    </citation>
    <scope>NUCLEOTIDE SEQUENCE [GENOMIC DNA]</scope>
    <source>
        <strain>ATCC 10895 / CBS 109.51 / FGSC 9923 / NRRL Y-1056</strain>
    </source>
</reference>
<reference key="2">
    <citation type="journal article" date="2004" name="Science">
        <title>The Ashbya gossypii genome as a tool for mapping the ancient Saccharomyces cerevisiae genome.</title>
        <authorList>
            <person name="Dietrich F.S."/>
            <person name="Voegeli S."/>
            <person name="Brachat S."/>
            <person name="Lerch A."/>
            <person name="Gates K."/>
            <person name="Steiner S."/>
            <person name="Mohr C."/>
            <person name="Poehlmann R."/>
            <person name="Luedi P."/>
            <person name="Choi S."/>
            <person name="Wing R.A."/>
            <person name="Flavier A."/>
            <person name="Gaffney T.D."/>
            <person name="Philippsen P."/>
        </authorList>
    </citation>
    <scope>NUCLEOTIDE SEQUENCE [LARGE SCALE GENOMIC DNA]</scope>
    <source>
        <strain>ATCC 10895 / CBS 109.51 / FGSC 9923 / NRRL Y-1056</strain>
    </source>
</reference>
<reference key="3">
    <citation type="journal article" date="2013" name="G3 (Bethesda)">
        <title>Genomes of Ashbya fungi isolated from insects reveal four mating-type loci, numerous translocations, lack of transposons, and distinct gene duplications.</title>
        <authorList>
            <person name="Dietrich F.S."/>
            <person name="Voegeli S."/>
            <person name="Kuo S."/>
            <person name="Philippsen P."/>
        </authorList>
    </citation>
    <scope>GENOME REANNOTATION</scope>
    <source>
        <strain>ATCC 10895 / CBS 109.51 / FGSC 9923 / NRRL Y-1056</strain>
    </source>
</reference>